<proteinExistence type="inferred from homology"/>
<organism>
    <name type="scientific">Streptococcus pyogenes serotype M5 (strain Manfredo)</name>
    <dbReference type="NCBI Taxonomy" id="160491"/>
    <lineage>
        <taxon>Bacteria</taxon>
        <taxon>Bacillati</taxon>
        <taxon>Bacillota</taxon>
        <taxon>Bacilli</taxon>
        <taxon>Lactobacillales</taxon>
        <taxon>Streptococcaceae</taxon>
        <taxon>Streptococcus</taxon>
    </lineage>
</organism>
<evidence type="ECO:0000255" key="1">
    <source>
        <dbReference type="HAMAP-Rule" id="MF_00362"/>
    </source>
</evidence>
<evidence type="ECO:0000305" key="2"/>
<reference key="1">
    <citation type="journal article" date="2007" name="J. Bacteriol.">
        <title>Complete genome of acute rheumatic fever-associated serotype M5 Streptococcus pyogenes strain Manfredo.</title>
        <authorList>
            <person name="Holden M.T.G."/>
            <person name="Scott A."/>
            <person name="Cherevach I."/>
            <person name="Chillingworth T."/>
            <person name="Churcher C."/>
            <person name="Cronin A."/>
            <person name="Dowd L."/>
            <person name="Feltwell T."/>
            <person name="Hamlin N."/>
            <person name="Holroyd S."/>
            <person name="Jagels K."/>
            <person name="Moule S."/>
            <person name="Mungall K."/>
            <person name="Quail M.A."/>
            <person name="Price C."/>
            <person name="Rabbinowitsch E."/>
            <person name="Sharp S."/>
            <person name="Skelton J."/>
            <person name="Whitehead S."/>
            <person name="Barrell B.G."/>
            <person name="Kehoe M."/>
            <person name="Parkhill J."/>
        </authorList>
    </citation>
    <scope>NUCLEOTIDE SEQUENCE [LARGE SCALE GENOMIC DNA]</scope>
    <source>
        <strain>Manfredo</strain>
    </source>
</reference>
<feature type="chain" id="PRO_1000005605" description="Large ribosomal subunit protein uL10">
    <location>
        <begin position="1"/>
        <end position="166"/>
    </location>
</feature>
<protein>
    <recommendedName>
        <fullName evidence="1">Large ribosomal subunit protein uL10</fullName>
    </recommendedName>
    <alternativeName>
        <fullName evidence="2">50S ribosomal protein L10</fullName>
    </alternativeName>
</protein>
<comment type="function">
    <text evidence="1">Forms part of the ribosomal stalk, playing a central role in the interaction of the ribosome with GTP-bound translation factors.</text>
</comment>
<comment type="subunit">
    <text evidence="1">Part of the ribosomal stalk of the 50S ribosomal subunit. The N-terminus interacts with L11 and the large rRNA to form the base of the stalk. The C-terminus forms an elongated spine to which L12 dimers bind in a sequential fashion forming a multimeric L10(L12)X complex.</text>
</comment>
<comment type="similarity">
    <text evidence="1">Belongs to the universal ribosomal protein uL10 family.</text>
</comment>
<dbReference type="EMBL" id="AM295007">
    <property type="protein sequence ID" value="CAM30300.1"/>
    <property type="molecule type" value="Genomic_DNA"/>
</dbReference>
<dbReference type="RefSeq" id="WP_002984821.1">
    <property type="nucleotide sequence ID" value="NC_009332.1"/>
</dbReference>
<dbReference type="SMR" id="A2REM5"/>
<dbReference type="GeneID" id="69900916"/>
<dbReference type="KEGG" id="spf:SpyM50973"/>
<dbReference type="HOGENOM" id="CLU_092227_2_0_9"/>
<dbReference type="GO" id="GO:0015934">
    <property type="term" value="C:large ribosomal subunit"/>
    <property type="evidence" value="ECO:0007669"/>
    <property type="project" value="InterPro"/>
</dbReference>
<dbReference type="GO" id="GO:0070180">
    <property type="term" value="F:large ribosomal subunit rRNA binding"/>
    <property type="evidence" value="ECO:0007669"/>
    <property type="project" value="UniProtKB-UniRule"/>
</dbReference>
<dbReference type="GO" id="GO:0003735">
    <property type="term" value="F:structural constituent of ribosome"/>
    <property type="evidence" value="ECO:0007669"/>
    <property type="project" value="InterPro"/>
</dbReference>
<dbReference type="GO" id="GO:0006412">
    <property type="term" value="P:translation"/>
    <property type="evidence" value="ECO:0007669"/>
    <property type="project" value="UniProtKB-UniRule"/>
</dbReference>
<dbReference type="CDD" id="cd05797">
    <property type="entry name" value="Ribosomal_L10"/>
    <property type="match status" value="1"/>
</dbReference>
<dbReference type="FunFam" id="3.30.70.1730:FF:000001">
    <property type="entry name" value="50S ribosomal protein L10"/>
    <property type="match status" value="1"/>
</dbReference>
<dbReference type="Gene3D" id="3.30.70.1730">
    <property type="match status" value="1"/>
</dbReference>
<dbReference type="HAMAP" id="MF_00362">
    <property type="entry name" value="Ribosomal_uL10"/>
    <property type="match status" value="1"/>
</dbReference>
<dbReference type="InterPro" id="IPR001790">
    <property type="entry name" value="Ribosomal_uL10"/>
</dbReference>
<dbReference type="InterPro" id="IPR043141">
    <property type="entry name" value="Ribosomal_uL10-like_sf"/>
</dbReference>
<dbReference type="InterPro" id="IPR022973">
    <property type="entry name" value="Ribosomal_uL10_bac"/>
</dbReference>
<dbReference type="InterPro" id="IPR047865">
    <property type="entry name" value="Ribosomal_uL10_bac_type"/>
</dbReference>
<dbReference type="InterPro" id="IPR002363">
    <property type="entry name" value="Ribosomal_uL10_CS_bac"/>
</dbReference>
<dbReference type="NCBIfam" id="NF000955">
    <property type="entry name" value="PRK00099.1-1"/>
    <property type="match status" value="1"/>
</dbReference>
<dbReference type="PANTHER" id="PTHR11560">
    <property type="entry name" value="39S RIBOSOMAL PROTEIN L10, MITOCHONDRIAL"/>
    <property type="match status" value="1"/>
</dbReference>
<dbReference type="Pfam" id="PF00466">
    <property type="entry name" value="Ribosomal_L10"/>
    <property type="match status" value="1"/>
</dbReference>
<dbReference type="SUPFAM" id="SSF160369">
    <property type="entry name" value="Ribosomal protein L10-like"/>
    <property type="match status" value="1"/>
</dbReference>
<dbReference type="PROSITE" id="PS01109">
    <property type="entry name" value="RIBOSOMAL_L10"/>
    <property type="match status" value="1"/>
</dbReference>
<accession>A2REM5</accession>
<sequence>MSEAIIAKKAEQVELIAEKMKAAASIVVVDSRGLTVDQDTVLRRSLRESGVEFKVIKNSILTRAAEKAGLDELKDVFVGPSAVAFSNEDVIAPAKVINDFTKTADALEIKGGAIEGAVSSKEEIQALATLPNREGMLSMLLSVLQAPVRNVAYAVKAVAENKEGAA</sequence>
<keyword id="KW-0687">Ribonucleoprotein</keyword>
<keyword id="KW-0689">Ribosomal protein</keyword>
<keyword id="KW-0694">RNA-binding</keyword>
<keyword id="KW-0699">rRNA-binding</keyword>
<name>RL10_STRPG</name>
<gene>
    <name evidence="1" type="primary">rplJ</name>
    <name type="ordered locus">SpyM50973</name>
</gene>